<reference key="1">
    <citation type="journal article" date="2011" name="Stand. Genomic Sci.">
        <title>Complete genome sequence of the halophilic and highly halotolerant Chromohalobacter salexigens type strain (1H11(T)).</title>
        <authorList>
            <person name="Copeland A."/>
            <person name="O'Connor K."/>
            <person name="Lucas S."/>
            <person name="Lapidus A."/>
            <person name="Berry K.W."/>
            <person name="Detter J.C."/>
            <person name="Del Rio T.G."/>
            <person name="Hammon N."/>
            <person name="Dalin E."/>
            <person name="Tice H."/>
            <person name="Pitluck S."/>
            <person name="Bruce D."/>
            <person name="Goodwin L."/>
            <person name="Han C."/>
            <person name="Tapia R."/>
            <person name="Saunders E."/>
            <person name="Schmutz J."/>
            <person name="Brettin T."/>
            <person name="Larimer F."/>
            <person name="Land M."/>
            <person name="Hauser L."/>
            <person name="Vargas C."/>
            <person name="Nieto J.J."/>
            <person name="Kyrpides N.C."/>
            <person name="Ivanova N."/>
            <person name="Goker M."/>
            <person name="Klenk H.P."/>
            <person name="Csonka L.N."/>
            <person name="Woyke T."/>
        </authorList>
    </citation>
    <scope>NUCLEOTIDE SEQUENCE [LARGE SCALE GENOMIC DNA]</scope>
    <source>
        <strain>ATCC BAA-138 / DSM 3043 / CIP 106854 / NCIMB 13768 / 1H11</strain>
    </source>
</reference>
<name>TSAC_CHRSD</name>
<feature type="chain" id="PRO_0000352904" description="Threonylcarbamoyl-AMP synthase">
    <location>
        <begin position="1"/>
        <end position="185"/>
    </location>
</feature>
<feature type="domain" description="YrdC-like" evidence="1">
    <location>
        <begin position="5"/>
        <end position="185"/>
    </location>
</feature>
<proteinExistence type="inferred from homology"/>
<dbReference type="EC" id="2.7.7.87" evidence="1"/>
<dbReference type="EMBL" id="CP000285">
    <property type="protein sequence ID" value="ABE60210.1"/>
    <property type="molecule type" value="Genomic_DNA"/>
</dbReference>
<dbReference type="RefSeq" id="WP_011508156.1">
    <property type="nucleotide sequence ID" value="NC_007963.1"/>
</dbReference>
<dbReference type="SMR" id="Q1QTJ8"/>
<dbReference type="STRING" id="290398.Csal_2864"/>
<dbReference type="GeneID" id="95335559"/>
<dbReference type="KEGG" id="csa:Csal_2864"/>
<dbReference type="eggNOG" id="COG0009">
    <property type="taxonomic scope" value="Bacteria"/>
</dbReference>
<dbReference type="HOGENOM" id="CLU_031397_6_0_6"/>
<dbReference type="OrthoDB" id="9814580at2"/>
<dbReference type="Proteomes" id="UP000000239">
    <property type="component" value="Chromosome"/>
</dbReference>
<dbReference type="GO" id="GO:0005737">
    <property type="term" value="C:cytoplasm"/>
    <property type="evidence" value="ECO:0007669"/>
    <property type="project" value="UniProtKB-SubCell"/>
</dbReference>
<dbReference type="GO" id="GO:0005524">
    <property type="term" value="F:ATP binding"/>
    <property type="evidence" value="ECO:0007669"/>
    <property type="project" value="UniProtKB-UniRule"/>
</dbReference>
<dbReference type="GO" id="GO:0003725">
    <property type="term" value="F:double-stranded RNA binding"/>
    <property type="evidence" value="ECO:0007669"/>
    <property type="project" value="InterPro"/>
</dbReference>
<dbReference type="GO" id="GO:0061710">
    <property type="term" value="F:L-threonylcarbamoyladenylate synthase"/>
    <property type="evidence" value="ECO:0007669"/>
    <property type="project" value="UniProtKB-EC"/>
</dbReference>
<dbReference type="GO" id="GO:0000049">
    <property type="term" value="F:tRNA binding"/>
    <property type="evidence" value="ECO:0007669"/>
    <property type="project" value="TreeGrafter"/>
</dbReference>
<dbReference type="GO" id="GO:0006450">
    <property type="term" value="P:regulation of translational fidelity"/>
    <property type="evidence" value="ECO:0007669"/>
    <property type="project" value="TreeGrafter"/>
</dbReference>
<dbReference type="GO" id="GO:0002949">
    <property type="term" value="P:tRNA threonylcarbamoyladenosine modification"/>
    <property type="evidence" value="ECO:0007669"/>
    <property type="project" value="UniProtKB-UniRule"/>
</dbReference>
<dbReference type="FunFam" id="3.90.870.10:FF:000004">
    <property type="entry name" value="Threonylcarbamoyl-AMP synthase"/>
    <property type="match status" value="1"/>
</dbReference>
<dbReference type="Gene3D" id="3.90.870.10">
    <property type="entry name" value="DHBP synthase"/>
    <property type="match status" value="1"/>
</dbReference>
<dbReference type="HAMAP" id="MF_01852">
    <property type="entry name" value="TsaC"/>
    <property type="match status" value="1"/>
</dbReference>
<dbReference type="InterPro" id="IPR017945">
    <property type="entry name" value="DHBP_synth_RibB-like_a/b_dom"/>
</dbReference>
<dbReference type="InterPro" id="IPR006070">
    <property type="entry name" value="Sua5-like_dom"/>
</dbReference>
<dbReference type="InterPro" id="IPR023535">
    <property type="entry name" value="TC-AMP_synthase"/>
</dbReference>
<dbReference type="InterPro" id="IPR050156">
    <property type="entry name" value="TC-AMP_synthase_SUA5"/>
</dbReference>
<dbReference type="PANTHER" id="PTHR17490">
    <property type="entry name" value="SUA5"/>
    <property type="match status" value="1"/>
</dbReference>
<dbReference type="PANTHER" id="PTHR17490:SF18">
    <property type="entry name" value="THREONYLCARBAMOYL-AMP SYNTHASE"/>
    <property type="match status" value="1"/>
</dbReference>
<dbReference type="Pfam" id="PF01300">
    <property type="entry name" value="Sua5_yciO_yrdC"/>
    <property type="match status" value="1"/>
</dbReference>
<dbReference type="SUPFAM" id="SSF55821">
    <property type="entry name" value="YrdC/RibB"/>
    <property type="match status" value="1"/>
</dbReference>
<dbReference type="PROSITE" id="PS51163">
    <property type="entry name" value="YRDC"/>
    <property type="match status" value="1"/>
</dbReference>
<evidence type="ECO:0000255" key="1">
    <source>
        <dbReference type="HAMAP-Rule" id="MF_01852"/>
    </source>
</evidence>
<comment type="function">
    <text evidence="1">Required for the formation of a threonylcarbamoyl group on adenosine at position 37 (t(6)A37) in tRNAs that read codons beginning with adenine. Catalyzes the conversion of L-threonine, HCO(3)(-)/CO(2) and ATP to give threonylcarbamoyl-AMP (TC-AMP) as the acyladenylate intermediate, with the release of diphosphate.</text>
</comment>
<comment type="catalytic activity">
    <reaction evidence="1">
        <text>L-threonine + hydrogencarbonate + ATP = L-threonylcarbamoyladenylate + diphosphate + H2O</text>
        <dbReference type="Rhea" id="RHEA:36407"/>
        <dbReference type="ChEBI" id="CHEBI:15377"/>
        <dbReference type="ChEBI" id="CHEBI:17544"/>
        <dbReference type="ChEBI" id="CHEBI:30616"/>
        <dbReference type="ChEBI" id="CHEBI:33019"/>
        <dbReference type="ChEBI" id="CHEBI:57926"/>
        <dbReference type="ChEBI" id="CHEBI:73682"/>
        <dbReference type="EC" id="2.7.7.87"/>
    </reaction>
</comment>
<comment type="subcellular location">
    <subcellularLocation>
        <location evidence="1">Cytoplasm</location>
    </subcellularLocation>
</comment>
<comment type="similarity">
    <text evidence="1">Belongs to the SUA5 family. TsaC subfamily.</text>
</comment>
<keyword id="KW-0067">ATP-binding</keyword>
<keyword id="KW-0963">Cytoplasm</keyword>
<keyword id="KW-0547">Nucleotide-binding</keyword>
<keyword id="KW-0548">Nucleotidyltransferase</keyword>
<keyword id="KW-1185">Reference proteome</keyword>
<keyword id="KW-0808">Transferase</keyword>
<keyword id="KW-0819">tRNA processing</keyword>
<sequence length="185" mass="19594">MQETADRIADAVAALRRGALLAYPTEAVWGLGCDPDDDAALARLIALKQRDPAKGLILIAGDMDQLEPWLAGLDALQRARLAESWPGPNTWLVPDNGRARPLLRGEHTSLAVRVSDHPLVRQLCAAFGGPLVSSSANRAGEPPAMSAADVRAAFGEAVTLLDGALGGYARPSTIRDLQSGETLRR</sequence>
<organism>
    <name type="scientific">Chromohalobacter salexigens (strain ATCC BAA-138 / DSM 3043 / CIP 106854 / NCIMB 13768 / 1H11)</name>
    <dbReference type="NCBI Taxonomy" id="290398"/>
    <lineage>
        <taxon>Bacteria</taxon>
        <taxon>Pseudomonadati</taxon>
        <taxon>Pseudomonadota</taxon>
        <taxon>Gammaproteobacteria</taxon>
        <taxon>Oceanospirillales</taxon>
        <taxon>Halomonadaceae</taxon>
        <taxon>Chromohalobacter</taxon>
    </lineage>
</organism>
<protein>
    <recommendedName>
        <fullName evidence="1">Threonylcarbamoyl-AMP synthase</fullName>
        <shortName evidence="1">TC-AMP synthase</shortName>
        <ecNumber evidence="1">2.7.7.87</ecNumber>
    </recommendedName>
    <alternativeName>
        <fullName evidence="1">L-threonylcarbamoyladenylate synthase</fullName>
    </alternativeName>
    <alternativeName>
        <fullName evidence="1">t(6)A37 threonylcarbamoyladenosine biosynthesis protein TsaC</fullName>
    </alternativeName>
    <alternativeName>
        <fullName evidence="1">tRNA threonylcarbamoyladenosine biosynthesis protein TsaC</fullName>
    </alternativeName>
</protein>
<gene>
    <name evidence="1" type="primary">tsaC</name>
    <name type="synonym">rimN</name>
    <name type="ordered locus">Csal_2864</name>
</gene>
<accession>Q1QTJ8</accession>